<protein>
    <recommendedName>
        <fullName evidence="1">Ribosomal RNA small subunit methyltransferase B</fullName>
        <ecNumber evidence="1">2.1.1.176</ecNumber>
    </recommendedName>
    <alternativeName>
        <fullName evidence="1">16S rRNA m5C967 methyltransferase</fullName>
    </alternativeName>
    <alternativeName>
        <fullName evidence="1">rRNA (cytosine-C(5)-)-methyltransferase RsmB</fullName>
    </alternativeName>
</protein>
<name>RSMB_PROMH</name>
<evidence type="ECO:0000255" key="1">
    <source>
        <dbReference type="HAMAP-Rule" id="MF_01856"/>
    </source>
</evidence>
<gene>
    <name evidence="1" type="primary">rsmB</name>
    <name evidence="1" type="synonym">sun</name>
    <name type="ordered locus">PMI3286</name>
</gene>
<keyword id="KW-0963">Cytoplasm</keyword>
<keyword id="KW-0489">Methyltransferase</keyword>
<keyword id="KW-1185">Reference proteome</keyword>
<keyword id="KW-0694">RNA-binding</keyword>
<keyword id="KW-0698">rRNA processing</keyword>
<keyword id="KW-0949">S-adenosyl-L-methionine</keyword>
<keyword id="KW-0808">Transferase</keyword>
<organism>
    <name type="scientific">Proteus mirabilis (strain HI4320)</name>
    <dbReference type="NCBI Taxonomy" id="529507"/>
    <lineage>
        <taxon>Bacteria</taxon>
        <taxon>Pseudomonadati</taxon>
        <taxon>Pseudomonadota</taxon>
        <taxon>Gammaproteobacteria</taxon>
        <taxon>Enterobacterales</taxon>
        <taxon>Morganellaceae</taxon>
        <taxon>Proteus</taxon>
    </lineage>
</organism>
<accession>B4F1L5</accession>
<reference key="1">
    <citation type="journal article" date="2008" name="J. Bacteriol.">
        <title>Complete genome sequence of uropathogenic Proteus mirabilis, a master of both adherence and motility.</title>
        <authorList>
            <person name="Pearson M.M."/>
            <person name="Sebaihia M."/>
            <person name="Churcher C."/>
            <person name="Quail M.A."/>
            <person name="Seshasayee A.S."/>
            <person name="Luscombe N.M."/>
            <person name="Abdellah Z."/>
            <person name="Arrosmith C."/>
            <person name="Atkin B."/>
            <person name="Chillingworth T."/>
            <person name="Hauser H."/>
            <person name="Jagels K."/>
            <person name="Moule S."/>
            <person name="Mungall K."/>
            <person name="Norbertczak H."/>
            <person name="Rabbinowitsch E."/>
            <person name="Walker D."/>
            <person name="Whithead S."/>
            <person name="Thomson N.R."/>
            <person name="Rather P.N."/>
            <person name="Parkhill J."/>
            <person name="Mobley H.L.T."/>
        </authorList>
    </citation>
    <scope>NUCLEOTIDE SEQUENCE [LARGE SCALE GENOMIC DNA]</scope>
    <source>
        <strain>HI4320</strain>
    </source>
</reference>
<sequence length="422" mass="48084">MKTSYNLRSIAAKAIAQVLDQGLSLSSVIPELQKNISDKDKALLQELCFGTLRTLPQLEWIIQQLMDKPLKGKQRILHYLIMVGLYQLLYTRVPAHAALAETVNGAIALKKPQLKGLINGVLRQFQRQQDVLMERFQNNDSRYLHPSWLLTRIKNAYPELWESIIEGNNQKPPMWLRVNQIHHSREQYLALLEKEGISAFSDDHHPNAIRLETPCNVHLLPGFNEGWVTVQDRSAQRCAELLAPQNNEQILDLCAAPGGKTTHILEIAPKAHVLAIDIDEQRLARVKENLNRLKLHATVKSGDGRYPEQWCANMQFDRILLDAPCSATGVIRRHPDIKWLRRNEDIAQLAQIQKEILHAIWPYLKSGGTLVYATCSILPEENSQQIAAFLSSMQDAQCDYQHQCLPEQYSGDGFFYALINKK</sequence>
<comment type="function">
    <text evidence="1">Specifically methylates the cytosine at position 967 (m5C967) of 16S rRNA.</text>
</comment>
<comment type="catalytic activity">
    <reaction evidence="1">
        <text>cytidine(967) in 16S rRNA + S-adenosyl-L-methionine = 5-methylcytidine(967) in 16S rRNA + S-adenosyl-L-homocysteine + H(+)</text>
        <dbReference type="Rhea" id="RHEA:42748"/>
        <dbReference type="Rhea" id="RHEA-COMP:10219"/>
        <dbReference type="Rhea" id="RHEA-COMP:10220"/>
        <dbReference type="ChEBI" id="CHEBI:15378"/>
        <dbReference type="ChEBI" id="CHEBI:57856"/>
        <dbReference type="ChEBI" id="CHEBI:59789"/>
        <dbReference type="ChEBI" id="CHEBI:74483"/>
        <dbReference type="ChEBI" id="CHEBI:82748"/>
        <dbReference type="EC" id="2.1.1.176"/>
    </reaction>
</comment>
<comment type="subcellular location">
    <subcellularLocation>
        <location evidence="1">Cytoplasm</location>
    </subcellularLocation>
</comment>
<comment type="similarity">
    <text evidence="1">Belongs to the class I-like SAM-binding methyltransferase superfamily. RsmB/NOP family.</text>
</comment>
<dbReference type="EC" id="2.1.1.176" evidence="1"/>
<dbReference type="EMBL" id="AM942759">
    <property type="protein sequence ID" value="CAR46442.1"/>
    <property type="molecule type" value="Genomic_DNA"/>
</dbReference>
<dbReference type="RefSeq" id="WP_004249887.1">
    <property type="nucleotide sequence ID" value="NC_010554.1"/>
</dbReference>
<dbReference type="SMR" id="B4F1L5"/>
<dbReference type="EnsemblBacteria" id="CAR46442">
    <property type="protein sequence ID" value="CAR46442"/>
    <property type="gene ID" value="PMI3286"/>
</dbReference>
<dbReference type="GeneID" id="6801636"/>
<dbReference type="KEGG" id="pmr:PMI3286"/>
<dbReference type="eggNOG" id="COG0144">
    <property type="taxonomic scope" value="Bacteria"/>
</dbReference>
<dbReference type="eggNOG" id="COG0781">
    <property type="taxonomic scope" value="Bacteria"/>
</dbReference>
<dbReference type="HOGENOM" id="CLU_005316_0_4_6"/>
<dbReference type="Proteomes" id="UP000008319">
    <property type="component" value="Chromosome"/>
</dbReference>
<dbReference type="GO" id="GO:0005829">
    <property type="term" value="C:cytosol"/>
    <property type="evidence" value="ECO:0007669"/>
    <property type="project" value="TreeGrafter"/>
</dbReference>
<dbReference type="GO" id="GO:0003723">
    <property type="term" value="F:RNA binding"/>
    <property type="evidence" value="ECO:0007669"/>
    <property type="project" value="UniProtKB-KW"/>
</dbReference>
<dbReference type="GO" id="GO:0009383">
    <property type="term" value="F:rRNA (cytosine-C5-)-methyltransferase activity"/>
    <property type="evidence" value="ECO:0007669"/>
    <property type="project" value="TreeGrafter"/>
</dbReference>
<dbReference type="GO" id="GO:0006355">
    <property type="term" value="P:regulation of DNA-templated transcription"/>
    <property type="evidence" value="ECO:0007669"/>
    <property type="project" value="InterPro"/>
</dbReference>
<dbReference type="GO" id="GO:0070475">
    <property type="term" value="P:rRNA base methylation"/>
    <property type="evidence" value="ECO:0007669"/>
    <property type="project" value="TreeGrafter"/>
</dbReference>
<dbReference type="CDD" id="cd02440">
    <property type="entry name" value="AdoMet_MTases"/>
    <property type="match status" value="1"/>
</dbReference>
<dbReference type="CDD" id="cd00620">
    <property type="entry name" value="Methyltransferase_Sun"/>
    <property type="match status" value="1"/>
</dbReference>
<dbReference type="FunFam" id="1.10.940.10:FF:000002">
    <property type="entry name" value="Ribosomal RNA small subunit methyltransferase B"/>
    <property type="match status" value="1"/>
</dbReference>
<dbReference type="FunFam" id="3.30.70.1170:FF:000002">
    <property type="entry name" value="Ribosomal RNA small subunit methyltransferase B"/>
    <property type="match status" value="1"/>
</dbReference>
<dbReference type="FunFam" id="3.40.50.150:FF:000022">
    <property type="entry name" value="Ribosomal RNA small subunit methyltransferase B"/>
    <property type="match status" value="1"/>
</dbReference>
<dbReference type="Gene3D" id="1.10.287.730">
    <property type="entry name" value="Helix hairpin bin"/>
    <property type="match status" value="1"/>
</dbReference>
<dbReference type="Gene3D" id="1.10.940.10">
    <property type="entry name" value="NusB-like"/>
    <property type="match status" value="1"/>
</dbReference>
<dbReference type="Gene3D" id="3.30.70.1170">
    <property type="entry name" value="Sun protein, domain 3"/>
    <property type="match status" value="1"/>
</dbReference>
<dbReference type="Gene3D" id="3.40.50.150">
    <property type="entry name" value="Vaccinia Virus protein VP39"/>
    <property type="match status" value="1"/>
</dbReference>
<dbReference type="HAMAP" id="MF_01856">
    <property type="entry name" value="16SrRNA_methyltr_B"/>
    <property type="match status" value="1"/>
</dbReference>
<dbReference type="InterPro" id="IPR049560">
    <property type="entry name" value="MeTrfase_RsmB-F_NOP2_cat"/>
</dbReference>
<dbReference type="InterPro" id="IPR001678">
    <property type="entry name" value="MeTrfase_RsmB-F_NOP2_dom"/>
</dbReference>
<dbReference type="InterPro" id="IPR035926">
    <property type="entry name" value="NusB-like_sf"/>
</dbReference>
<dbReference type="InterPro" id="IPR006027">
    <property type="entry name" value="NusB_RsmB_TIM44"/>
</dbReference>
<dbReference type="InterPro" id="IPR023267">
    <property type="entry name" value="RCMT"/>
</dbReference>
<dbReference type="InterPro" id="IPR004573">
    <property type="entry name" value="rRNA_ssu_MeTfrase_B"/>
</dbReference>
<dbReference type="InterPro" id="IPR023541">
    <property type="entry name" value="rRNA_ssu_MeTfrase_B_ent"/>
</dbReference>
<dbReference type="InterPro" id="IPR054728">
    <property type="entry name" value="RsmB-like_ferredoxin"/>
</dbReference>
<dbReference type="InterPro" id="IPR048019">
    <property type="entry name" value="RsmB-like_N"/>
</dbReference>
<dbReference type="InterPro" id="IPR018314">
    <property type="entry name" value="RsmB/NOL1/NOP2-like_CS"/>
</dbReference>
<dbReference type="InterPro" id="IPR029063">
    <property type="entry name" value="SAM-dependent_MTases_sf"/>
</dbReference>
<dbReference type="NCBIfam" id="NF008149">
    <property type="entry name" value="PRK10901.1"/>
    <property type="match status" value="1"/>
</dbReference>
<dbReference type="NCBIfam" id="NF011494">
    <property type="entry name" value="PRK14902.1"/>
    <property type="match status" value="1"/>
</dbReference>
<dbReference type="NCBIfam" id="TIGR00563">
    <property type="entry name" value="rsmB"/>
    <property type="match status" value="1"/>
</dbReference>
<dbReference type="PANTHER" id="PTHR22807:SF61">
    <property type="entry name" value="NOL1_NOP2_SUN FAMILY PROTEIN _ ANTITERMINATION NUSB DOMAIN-CONTAINING PROTEIN"/>
    <property type="match status" value="1"/>
</dbReference>
<dbReference type="PANTHER" id="PTHR22807">
    <property type="entry name" value="NOP2 YEAST -RELATED NOL1/NOP2/FMU SUN DOMAIN-CONTAINING"/>
    <property type="match status" value="1"/>
</dbReference>
<dbReference type="Pfam" id="PF01189">
    <property type="entry name" value="Methyltr_RsmB-F"/>
    <property type="match status" value="1"/>
</dbReference>
<dbReference type="Pfam" id="PF01029">
    <property type="entry name" value="NusB"/>
    <property type="match status" value="1"/>
</dbReference>
<dbReference type="Pfam" id="PF22458">
    <property type="entry name" value="RsmF-B_ferredox"/>
    <property type="match status" value="1"/>
</dbReference>
<dbReference type="PRINTS" id="PR02008">
    <property type="entry name" value="RCMTFAMILY"/>
</dbReference>
<dbReference type="SUPFAM" id="SSF48013">
    <property type="entry name" value="NusB-like"/>
    <property type="match status" value="1"/>
</dbReference>
<dbReference type="SUPFAM" id="SSF53335">
    <property type="entry name" value="S-adenosyl-L-methionine-dependent methyltransferases"/>
    <property type="match status" value="1"/>
</dbReference>
<dbReference type="PROSITE" id="PS01153">
    <property type="entry name" value="NOL1_NOP2_SUN"/>
    <property type="match status" value="1"/>
</dbReference>
<dbReference type="PROSITE" id="PS51686">
    <property type="entry name" value="SAM_MT_RSMB_NOP"/>
    <property type="match status" value="1"/>
</dbReference>
<feature type="chain" id="PRO_0000366162" description="Ribosomal RNA small subunit methyltransferase B">
    <location>
        <begin position="1"/>
        <end position="422"/>
    </location>
</feature>
<feature type="active site" description="Nucleophile" evidence="1">
    <location>
        <position position="375"/>
    </location>
</feature>
<feature type="binding site" evidence="1">
    <location>
        <begin position="254"/>
        <end position="260"/>
    </location>
    <ligand>
        <name>S-adenosyl-L-methionine</name>
        <dbReference type="ChEBI" id="CHEBI:59789"/>
    </ligand>
</feature>
<feature type="binding site" evidence="1">
    <location>
        <position position="277"/>
    </location>
    <ligand>
        <name>S-adenosyl-L-methionine</name>
        <dbReference type="ChEBI" id="CHEBI:59789"/>
    </ligand>
</feature>
<feature type="binding site" evidence="1">
    <location>
        <position position="303"/>
    </location>
    <ligand>
        <name>S-adenosyl-L-methionine</name>
        <dbReference type="ChEBI" id="CHEBI:59789"/>
    </ligand>
</feature>
<feature type="binding site" evidence="1">
    <location>
        <position position="322"/>
    </location>
    <ligand>
        <name>S-adenosyl-L-methionine</name>
        <dbReference type="ChEBI" id="CHEBI:59789"/>
    </ligand>
</feature>
<proteinExistence type="inferred from homology"/>